<protein>
    <recommendedName>
        <fullName evidence="3">KICSTOR complex protein ITFG2</fullName>
    </recommendedName>
    <alternativeName>
        <fullName evidence="4">Adrenal medulla 50 kDa protein</fullName>
    </alternativeName>
    <alternativeName>
        <fullName evidence="1">Integrin-alpha FG-GAP repeat-containing protein 2</fullName>
    </alternativeName>
</protein>
<reference key="1">
    <citation type="submission" date="1994-05" db="EMBL/GenBank/DDBJ databases">
        <title>A cDNA encoding a protein of 50 kDa from bovine adrenal medulla.</title>
        <authorList>
            <person name="Nelson N."/>
            <person name="Nelson H."/>
            <person name="Mandiyan S."/>
        </authorList>
    </citation>
    <scope>NUCLEOTIDE SEQUENCE [MRNA]</scope>
    <source>
        <tissue>Adrenal medulla</tissue>
    </source>
</reference>
<proteinExistence type="evidence at transcript level"/>
<feature type="chain" id="PRO_0000064447" description="KICSTOR complex protein ITFG2">
    <location>
        <begin position="1"/>
        <end position="532"/>
    </location>
</feature>
<feature type="repeat" description="FG-GAP 1; atypical">
    <location>
        <begin position="19"/>
        <end position="48"/>
    </location>
</feature>
<feature type="repeat" description="FG-GAP 2; atypical">
    <location>
        <begin position="126"/>
        <end position="155"/>
    </location>
</feature>
<feature type="region of interest" description="Disordered" evidence="2">
    <location>
        <begin position="248"/>
        <end position="271"/>
    </location>
</feature>
<feature type="modified residue" description="Phosphoserine" evidence="1">
    <location>
        <position position="104"/>
    </location>
</feature>
<gene>
    <name evidence="1" type="primary">ITFG2</name>
    <name evidence="4" type="synonym">ADP50</name>
</gene>
<comment type="function">
    <text evidence="1">As part of the KICSTOR complex functions in the amino acid-sensing branch of the TORC1 signaling pathway. Recruits, in an amino acid-independent manner, the GATOR1 complex to the lysosomal membranes and allows its interaction with GATOR2 and the RAG GTPases. Functions upstream of the RAG GTPases and is required to negatively regulate mTORC1 signaling in absence of amino acids. In absence of the KICSTOR complex mTORC1 is constitutively localized to the lysosome and activated. The KICSTOR complex is also probably involved in the regulation of mTORC1 by glucose.</text>
</comment>
<comment type="subunit">
    <text evidence="1">Part of the KICSTOR complex composed of KPTN, ITFG2, KICS2 and SZT2. SZT2 probably serves as a link between the other three proteins in the KICSTOR complex and may mediate the direct interaction with the GATOR complex via GATOR1. The KICSTOR complex interacts directly with the GATOR1 complex and most probably indirectly with the GATOR2 complex in an amino acid-independent manner.</text>
</comment>
<comment type="subcellular location">
    <subcellularLocation>
        <location evidence="1">Lysosome membrane</location>
    </subcellularLocation>
    <text evidence="1">Localization to lysosomes is amino acid-independent.</text>
</comment>
<evidence type="ECO:0000250" key="1">
    <source>
        <dbReference type="UniProtKB" id="Q969R8"/>
    </source>
</evidence>
<evidence type="ECO:0000256" key="2">
    <source>
        <dbReference type="SAM" id="MobiDB-lite"/>
    </source>
</evidence>
<evidence type="ECO:0000305" key="3"/>
<evidence type="ECO:0000312" key="4">
    <source>
        <dbReference type="EMBL" id="AAA17986.1"/>
    </source>
</evidence>
<dbReference type="EMBL" id="U04706">
    <property type="protein sequence ID" value="AAA17986.1"/>
    <property type="molecule type" value="mRNA"/>
</dbReference>
<dbReference type="RefSeq" id="NP_776987.1">
    <property type="nucleotide sequence ID" value="NM_174562.2"/>
</dbReference>
<dbReference type="FunCoup" id="Q27969">
    <property type="interactions" value="2867"/>
</dbReference>
<dbReference type="STRING" id="9913.ENSBTAP00000069173"/>
<dbReference type="PaxDb" id="9913-ENSBTAP00000010004"/>
<dbReference type="GeneID" id="282275"/>
<dbReference type="KEGG" id="bta:282275"/>
<dbReference type="CTD" id="55846"/>
<dbReference type="eggNOG" id="ENOG502QUBC">
    <property type="taxonomic scope" value="Eukaryota"/>
</dbReference>
<dbReference type="InParanoid" id="Q27969"/>
<dbReference type="OrthoDB" id="9996127at2759"/>
<dbReference type="Proteomes" id="UP000009136">
    <property type="component" value="Unplaced"/>
</dbReference>
<dbReference type="GO" id="GO:0140007">
    <property type="term" value="C:KICSTOR complex"/>
    <property type="evidence" value="ECO:0000250"/>
    <property type="project" value="UniProtKB"/>
</dbReference>
<dbReference type="GO" id="GO:0005765">
    <property type="term" value="C:lysosomal membrane"/>
    <property type="evidence" value="ECO:0000250"/>
    <property type="project" value="UniProtKB"/>
</dbReference>
<dbReference type="GO" id="GO:0034198">
    <property type="term" value="P:cellular response to amino acid starvation"/>
    <property type="evidence" value="ECO:0000250"/>
    <property type="project" value="UniProtKB"/>
</dbReference>
<dbReference type="GO" id="GO:0042149">
    <property type="term" value="P:cellular response to glucose starvation"/>
    <property type="evidence" value="ECO:0000250"/>
    <property type="project" value="UniProtKB"/>
</dbReference>
<dbReference type="GO" id="GO:1904262">
    <property type="term" value="P:negative regulation of TORC1 signaling"/>
    <property type="evidence" value="ECO:0000250"/>
    <property type="project" value="UniProtKB"/>
</dbReference>
<dbReference type="GO" id="GO:0032006">
    <property type="term" value="P:regulation of TOR signaling"/>
    <property type="evidence" value="ECO:0000318"/>
    <property type="project" value="GO_Central"/>
</dbReference>
<dbReference type="Gene3D" id="2.130.10.10">
    <property type="entry name" value="YVTN repeat-like/Quinoprotein amine dehydrogenase"/>
    <property type="match status" value="1"/>
</dbReference>
<dbReference type="InterPro" id="IPR028994">
    <property type="entry name" value="Integrin_alpha_N"/>
</dbReference>
<dbReference type="InterPro" id="IPR031793">
    <property type="entry name" value="KICSTOR_ITFG2"/>
</dbReference>
<dbReference type="InterPro" id="IPR011047">
    <property type="entry name" value="Quinoprotein_ADH-like_sf"/>
</dbReference>
<dbReference type="InterPro" id="IPR015943">
    <property type="entry name" value="WD40/YVTN_repeat-like_dom_sf"/>
</dbReference>
<dbReference type="PANTHER" id="PTHR16317">
    <property type="entry name" value="INTEGRIN ALPHA REPEAT DOMAIN-CONTAINING"/>
    <property type="match status" value="1"/>
</dbReference>
<dbReference type="PANTHER" id="PTHR16317:SF1">
    <property type="entry name" value="KICSTOR COMPLEX PROTEIN ITFG2"/>
    <property type="match status" value="1"/>
</dbReference>
<dbReference type="Pfam" id="PF15907">
    <property type="entry name" value="Itfg2"/>
    <property type="match status" value="1"/>
</dbReference>
<dbReference type="SUPFAM" id="SSF69318">
    <property type="entry name" value="Integrin alpha N-terminal domain"/>
    <property type="match status" value="1"/>
</dbReference>
<dbReference type="SUPFAM" id="SSF50998">
    <property type="entry name" value="Quinoprotein alcohol dehydrogenase-like"/>
    <property type="match status" value="1"/>
</dbReference>
<sequence>MRSVSYVQRVALEFSGSLFPHAICLGDVDNDTLNELVVGDTSGKLSVYKNDDSRPWLTCSCQGMLTCVGVGDVCNKGKNLVVAVSAEGWFHLCDLTPAKSLDGSGHHETLGGEEQRPVFKQHIPANTKVMLISDIDGDGRCELVVGYTDRVVRAFRWEDLGEGAEHPMGQLVLLKKWMLEGQVDSLSVTPGPLGVPELMVSQPGCAYAILLCTWNKDPGATPTSEGPMEGHSGAPGCPGRCVAPDLWPHPQQERLHSPHRQHQASHSPDSSASGLFALCTLDGTLKLMEEADRLLWSVQVDHQLFALEKLDVTGNGHEEVVACAWDGQTYIIDHNRTVVRFQVDENIRAFCAGLYACKDSRNSPCLVYVTFNQKIYVYWEVQLERMESTNLLKVLEAQPSSGSCWESWAWILMSCPPPAPCFTKPSTIQTSLHSAPPRAPRTPPSWTGFLAEQGAFCTSPPPPPPQLSGIWKTGSAHYWGRMAAPLGCGDCRPPGRLGEGRDKLPLCPFPCVPHLSRQQALPLPRAPYSCCL</sequence>
<name>ITFG2_BOVIN</name>
<keyword id="KW-0458">Lysosome</keyword>
<keyword id="KW-0472">Membrane</keyword>
<keyword id="KW-0597">Phosphoprotein</keyword>
<keyword id="KW-1185">Reference proteome</keyword>
<keyword id="KW-0677">Repeat</keyword>
<organism>
    <name type="scientific">Bos taurus</name>
    <name type="common">Bovine</name>
    <dbReference type="NCBI Taxonomy" id="9913"/>
    <lineage>
        <taxon>Eukaryota</taxon>
        <taxon>Metazoa</taxon>
        <taxon>Chordata</taxon>
        <taxon>Craniata</taxon>
        <taxon>Vertebrata</taxon>
        <taxon>Euteleostomi</taxon>
        <taxon>Mammalia</taxon>
        <taxon>Eutheria</taxon>
        <taxon>Laurasiatheria</taxon>
        <taxon>Artiodactyla</taxon>
        <taxon>Ruminantia</taxon>
        <taxon>Pecora</taxon>
        <taxon>Bovidae</taxon>
        <taxon>Bovinae</taxon>
        <taxon>Bos</taxon>
    </lineage>
</organism>
<accession>Q27969</accession>